<reference key="1">
    <citation type="journal article" date="2000" name="DNA Res.">
        <title>Structural analysis of Arabidopsis thaliana chromosome 3. I. Sequence features of the regions of 4,504,864 bp covered by sixty P1 and TAC clones.</title>
        <authorList>
            <person name="Sato S."/>
            <person name="Nakamura Y."/>
            <person name="Kaneko T."/>
            <person name="Katoh T."/>
            <person name="Asamizu E."/>
            <person name="Tabata S."/>
        </authorList>
    </citation>
    <scope>NUCLEOTIDE SEQUENCE [LARGE SCALE GENOMIC DNA]</scope>
    <source>
        <strain>cv. Columbia</strain>
    </source>
</reference>
<reference key="2">
    <citation type="journal article" date="2017" name="Plant J.">
        <title>Araport11: a complete reannotation of the Arabidopsis thaliana reference genome.</title>
        <authorList>
            <person name="Cheng C.Y."/>
            <person name="Krishnakumar V."/>
            <person name="Chan A.P."/>
            <person name="Thibaud-Nissen F."/>
            <person name="Schobel S."/>
            <person name="Town C.D."/>
        </authorList>
    </citation>
    <scope>GENOME REANNOTATION</scope>
    <source>
        <strain>cv. Columbia</strain>
    </source>
</reference>
<reference key="3">
    <citation type="journal article" date="2004" name="Plant Physiol.">
        <title>Genome-wide ORFeome cloning and analysis of Arabidopsis transcription factor genes.</title>
        <authorList>
            <person name="Gong W."/>
            <person name="Shen Y.-P."/>
            <person name="Ma L.-G."/>
            <person name="Pan Y."/>
            <person name="Du Y.-L."/>
            <person name="Wang D.-H."/>
            <person name="Yang J.-Y."/>
            <person name="Hu L.-D."/>
            <person name="Liu X.-F."/>
            <person name="Dong C.-X."/>
            <person name="Ma L."/>
            <person name="Chen Y.-H."/>
            <person name="Yang X.-Y."/>
            <person name="Gao Y."/>
            <person name="Zhu D."/>
            <person name="Tan X."/>
            <person name="Mu J.-Y."/>
            <person name="Zhang D.-B."/>
            <person name="Liu Y.-L."/>
            <person name="Dinesh-Kumar S.P."/>
            <person name="Li Y."/>
            <person name="Wang X.-P."/>
            <person name="Gu H.-Y."/>
            <person name="Qu L.-J."/>
            <person name="Bai S.-N."/>
            <person name="Lu Y.-T."/>
            <person name="Li J.-Y."/>
            <person name="Zhao J.-D."/>
            <person name="Zuo J."/>
            <person name="Huang H."/>
            <person name="Deng X.-W."/>
            <person name="Zhu Y.-X."/>
        </authorList>
    </citation>
    <scope>NUCLEOTIDE SEQUENCE [LARGE SCALE MRNA]</scope>
</reference>
<reference key="4">
    <citation type="journal article" date="2006" name="Plant Biotechnol. J.">
        <title>Simultaneous high-throughput recombinational cloning of open reading frames in closed and open configurations.</title>
        <authorList>
            <person name="Underwood B.A."/>
            <person name="Vanderhaeghen R."/>
            <person name="Whitford R."/>
            <person name="Town C.D."/>
            <person name="Hilson P."/>
        </authorList>
    </citation>
    <scope>NUCLEOTIDE SEQUENCE [LARGE SCALE MRNA]</scope>
    <source>
        <strain>cv. Columbia</strain>
    </source>
</reference>
<reference key="5">
    <citation type="journal article" date="2007" name="J. Exp. Bot.">
        <title>The conserved cysteine-rich domain of a tesmin/TSO1-like protein binds zinc in vitro and TSO1 is required for both male and female fertility in Arabidopsis thaliana.</title>
        <authorList>
            <person name="Andersen S.U."/>
            <person name="Algreen-Petersen R.G."/>
            <person name="Hoedl M."/>
            <person name="Jurkiewicz A."/>
            <person name="Cvitanich C."/>
            <person name="Braunschweig U."/>
            <person name="Schauser L."/>
            <person name="Oh S.A."/>
            <person name="Twell D."/>
            <person name="Jensen E.O."/>
        </authorList>
    </citation>
    <scope>GENE FAMILY</scope>
    <scope>NOMENCLATURE</scope>
    <scope>ZINC-BINDING</scope>
</reference>
<comment type="function">
    <text evidence="1">Plays a role in development of both male and female reproductive tissues.</text>
</comment>
<comment type="subcellular location">
    <subcellularLocation>
        <location evidence="3">Nucleus</location>
    </subcellularLocation>
</comment>
<comment type="domain">
    <text>The cysteine-rich domain CRC binds zinc in vitro.</text>
</comment>
<comment type="similarity">
    <text evidence="3">Belongs to the lin-54 family.</text>
</comment>
<comment type="sequence caution" evidence="3">
    <conflict type="erroneous termination">
        <sequence resource="EMBL-CDS" id="ABK28561"/>
    </conflict>
    <text>Extended C-terminus.</text>
</comment>
<comment type="sequence caution" evidence="3">
    <conflict type="erroneous gene model prediction">
        <sequence resource="EMBL-CDS" id="BAB02682"/>
    </conflict>
</comment>
<protein>
    <recommendedName>
        <fullName>Protein tesmin/TSO1-like CXC 8</fullName>
        <shortName>AtTCX8</shortName>
    </recommendedName>
</protein>
<name>TCX8_ARATH</name>
<evidence type="ECO:0000250" key="1"/>
<evidence type="ECO:0000255" key="2">
    <source>
        <dbReference type="PROSITE-ProRule" id="PRU00971"/>
    </source>
</evidence>
<evidence type="ECO:0000305" key="3"/>
<feature type="chain" id="PRO_0000418173" description="Protein tesmin/TSO1-like CXC 8">
    <location>
        <begin position="1"/>
        <end position="368"/>
    </location>
</feature>
<feature type="domain" description="CRC" evidence="2">
    <location>
        <begin position="64"/>
        <end position="185"/>
    </location>
</feature>
<accession>Q700D0</accession>
<accession>A0MEW6</accession>
<accession>Q9LW71</accession>
<sequence>MTGNADSGKIATEKDPRKLVFTKLEVSPVFRESPVKELPLFPPISREHSEAKDKTDEEGITSRKHKGCRCKQSKCLKLYCDCFASGVVCTDCDCVDCHNNSEKCDAREAAMVNVLGRNPNAFSEKALGSLTDNQCKAAPDTKPGLLSRGCKCKRTRCLKKYCECFQANLLCSDNCKCINCKNVSEAFQPPAFSAHNSPQVYRRRRDRELTEWNSCPAPLFSIPDNSIQNALGSPMSCSPKLPYRKKRSLMGYTSTLLPDLGDLCSLLVAASESATTTAEDQNRIFTKPDDKEAIELSSESESRNVEEEIQSRGRLIELIDVQYNGEEDSQCKTKTSVNETDIYMEQERAVLETFRDCLQKFIKSRLES</sequence>
<organism>
    <name type="scientific">Arabidopsis thaliana</name>
    <name type="common">Mouse-ear cress</name>
    <dbReference type="NCBI Taxonomy" id="3702"/>
    <lineage>
        <taxon>Eukaryota</taxon>
        <taxon>Viridiplantae</taxon>
        <taxon>Streptophyta</taxon>
        <taxon>Embryophyta</taxon>
        <taxon>Tracheophyta</taxon>
        <taxon>Spermatophyta</taxon>
        <taxon>Magnoliopsida</taxon>
        <taxon>eudicotyledons</taxon>
        <taxon>Gunneridae</taxon>
        <taxon>Pentapetalae</taxon>
        <taxon>rosids</taxon>
        <taxon>malvids</taxon>
        <taxon>Brassicales</taxon>
        <taxon>Brassicaceae</taxon>
        <taxon>Camelineae</taxon>
        <taxon>Arabidopsis</taxon>
    </lineage>
</organism>
<gene>
    <name type="primary">TCX8</name>
    <name type="ordered locus">At3g16160</name>
    <name type="ORF">MSL1.20</name>
</gene>
<keyword id="KW-0217">Developmental protein</keyword>
<keyword id="KW-0479">Metal-binding</keyword>
<keyword id="KW-0539">Nucleus</keyword>
<keyword id="KW-1185">Reference proteome</keyword>
<keyword id="KW-0862">Zinc</keyword>
<dbReference type="EMBL" id="AB012247">
    <property type="protein sequence ID" value="BAB02682.1"/>
    <property type="status" value="ALT_SEQ"/>
    <property type="molecule type" value="Genomic_DNA"/>
</dbReference>
<dbReference type="EMBL" id="CP002686">
    <property type="protein sequence ID" value="AEE75778.1"/>
    <property type="molecule type" value="Genomic_DNA"/>
</dbReference>
<dbReference type="EMBL" id="AJ630495">
    <property type="protein sequence ID" value="CAG25868.1"/>
    <property type="molecule type" value="mRNA"/>
</dbReference>
<dbReference type="EMBL" id="AY568667">
    <property type="protein sequence ID" value="AAS79557.1"/>
    <property type="molecule type" value="mRNA"/>
</dbReference>
<dbReference type="EMBL" id="DQ653089">
    <property type="protein sequence ID" value="ABK28561.1"/>
    <property type="status" value="ALT_SEQ"/>
    <property type="molecule type" value="mRNA"/>
</dbReference>
<dbReference type="RefSeq" id="NP_188237.2">
    <property type="nucleotide sequence ID" value="NM_112486.3"/>
</dbReference>
<dbReference type="SMR" id="Q700D0"/>
<dbReference type="BioGRID" id="6195">
    <property type="interactions" value="51"/>
</dbReference>
<dbReference type="FunCoup" id="Q700D0">
    <property type="interactions" value="1"/>
</dbReference>
<dbReference type="IntAct" id="Q700D0">
    <property type="interactions" value="51"/>
</dbReference>
<dbReference type="STRING" id="3702.Q700D0"/>
<dbReference type="PaxDb" id="3702-AT3G16160.1"/>
<dbReference type="EnsemblPlants" id="AT3G16160.1">
    <property type="protein sequence ID" value="AT3G16160.1"/>
    <property type="gene ID" value="AT3G16160"/>
</dbReference>
<dbReference type="GeneID" id="820861"/>
<dbReference type="Gramene" id="AT3G16160.1">
    <property type="protein sequence ID" value="AT3G16160.1"/>
    <property type="gene ID" value="AT3G16160"/>
</dbReference>
<dbReference type="KEGG" id="ath:AT3G16160"/>
<dbReference type="Araport" id="AT3G16160"/>
<dbReference type="TAIR" id="AT3G16160"/>
<dbReference type="eggNOG" id="KOG1171">
    <property type="taxonomic scope" value="Eukaryota"/>
</dbReference>
<dbReference type="HOGENOM" id="CLU_810346_0_0_1"/>
<dbReference type="InParanoid" id="Q700D0"/>
<dbReference type="OMA" id="CKCINCK"/>
<dbReference type="PhylomeDB" id="Q700D0"/>
<dbReference type="PRO" id="PR:Q700D0"/>
<dbReference type="Proteomes" id="UP000006548">
    <property type="component" value="Chromosome 3"/>
</dbReference>
<dbReference type="ExpressionAtlas" id="Q700D0">
    <property type="expression patterns" value="baseline and differential"/>
</dbReference>
<dbReference type="GO" id="GO:0005634">
    <property type="term" value="C:nucleus"/>
    <property type="evidence" value="ECO:0000314"/>
    <property type="project" value="TAIR"/>
</dbReference>
<dbReference type="GO" id="GO:0000987">
    <property type="term" value="F:cis-regulatory region sequence-specific DNA binding"/>
    <property type="evidence" value="ECO:0000353"/>
    <property type="project" value="TAIR"/>
</dbReference>
<dbReference type="GO" id="GO:0003700">
    <property type="term" value="F:DNA-binding transcription factor activity"/>
    <property type="evidence" value="ECO:0000250"/>
    <property type="project" value="TAIR"/>
</dbReference>
<dbReference type="GO" id="GO:0046872">
    <property type="term" value="F:metal ion binding"/>
    <property type="evidence" value="ECO:0007669"/>
    <property type="project" value="UniProtKB-KW"/>
</dbReference>
<dbReference type="InterPro" id="IPR005172">
    <property type="entry name" value="CRC"/>
</dbReference>
<dbReference type="InterPro" id="IPR028307">
    <property type="entry name" value="Lin-54_fam"/>
</dbReference>
<dbReference type="InterPro" id="IPR033467">
    <property type="entry name" value="Tesmin/TSO1-like_CXC"/>
</dbReference>
<dbReference type="PANTHER" id="PTHR12446:SF60">
    <property type="entry name" value="PROTEIN TESMIN_TSO1-LIKE CXC 8"/>
    <property type="match status" value="1"/>
</dbReference>
<dbReference type="PANTHER" id="PTHR12446">
    <property type="entry name" value="TESMIN/TSO1-RELATED"/>
    <property type="match status" value="1"/>
</dbReference>
<dbReference type="Pfam" id="PF03638">
    <property type="entry name" value="TCR"/>
    <property type="match status" value="2"/>
</dbReference>
<dbReference type="SMART" id="SM01114">
    <property type="entry name" value="CXC"/>
    <property type="match status" value="2"/>
</dbReference>
<dbReference type="PROSITE" id="PS51634">
    <property type="entry name" value="CRC"/>
    <property type="match status" value="1"/>
</dbReference>
<proteinExistence type="evidence at protein level"/>